<accession>B7LEL6</accession>
<sequence length="343" mass="37639">MSAFTPASEVLLRHSDDFEQSRILFAGDLQDDLPARLDTAASRAHTQQFHHWQVLSRQMGDNARFSLVATVDDVADCDTLIYYWPKNKPEAQFQLMNLLSLLPVGTDIFVVGENRSGVRSAEQMLADYAPLNKVDSARRCGLYFGRLEKQPVFDADKFWGEYSVDGLTVKTLPGVFSRDGLDVGSQLLLSTLTPHTKGKVLDVGCGAGVLSVAFARHSPKIRLTLCDVSAPAVEASRATLAANGVEGEVFASNVFSEVKGRFDMIISNPPFHDGMQTSLDAAQTLIRGAVRHLNSGGELRIVANAFLPYPDVLDETFGFHEVIAQTGRFKVYRAIMTRQAKKG</sequence>
<dbReference type="EC" id="2.1.1.172" evidence="1"/>
<dbReference type="EMBL" id="CU928145">
    <property type="protein sequence ID" value="CAV02161.1"/>
    <property type="molecule type" value="Genomic_DNA"/>
</dbReference>
<dbReference type="RefSeq" id="WP_001272345.1">
    <property type="nucleotide sequence ID" value="NC_011748.1"/>
</dbReference>
<dbReference type="SMR" id="B7LEL6"/>
<dbReference type="KEGG" id="eck:EC55989_5032"/>
<dbReference type="HOGENOM" id="CLU_049581_0_1_6"/>
<dbReference type="Proteomes" id="UP000000746">
    <property type="component" value="Chromosome"/>
</dbReference>
<dbReference type="GO" id="GO:0005737">
    <property type="term" value="C:cytoplasm"/>
    <property type="evidence" value="ECO:0007669"/>
    <property type="project" value="UniProtKB-SubCell"/>
</dbReference>
<dbReference type="GO" id="GO:0052914">
    <property type="term" value="F:16S rRNA (guanine(1207)-N(2))-methyltransferase activity"/>
    <property type="evidence" value="ECO:0007669"/>
    <property type="project" value="UniProtKB-EC"/>
</dbReference>
<dbReference type="GO" id="GO:0003676">
    <property type="term" value="F:nucleic acid binding"/>
    <property type="evidence" value="ECO:0007669"/>
    <property type="project" value="InterPro"/>
</dbReference>
<dbReference type="CDD" id="cd02440">
    <property type="entry name" value="AdoMet_MTases"/>
    <property type="match status" value="1"/>
</dbReference>
<dbReference type="FunFam" id="3.40.50.150:FF:000058">
    <property type="entry name" value="Ribosomal RNA small subunit methyltransferase C"/>
    <property type="match status" value="1"/>
</dbReference>
<dbReference type="FunFam" id="3.40.50.150:FF:000063">
    <property type="entry name" value="Ribosomal RNA small subunit methyltransferase C"/>
    <property type="match status" value="1"/>
</dbReference>
<dbReference type="Gene3D" id="3.40.50.150">
    <property type="entry name" value="Vaccinia Virus protein VP39"/>
    <property type="match status" value="2"/>
</dbReference>
<dbReference type="HAMAP" id="MF_01862">
    <property type="entry name" value="16SrRNA_methyltr_C"/>
    <property type="match status" value="1"/>
</dbReference>
<dbReference type="InterPro" id="IPR002052">
    <property type="entry name" value="DNA_methylase_N6_adenine_CS"/>
</dbReference>
<dbReference type="InterPro" id="IPR013675">
    <property type="entry name" value="Mtase_sm_N"/>
</dbReference>
<dbReference type="InterPro" id="IPR023543">
    <property type="entry name" value="rRNA_ssu_MeTfrase_C"/>
</dbReference>
<dbReference type="InterPro" id="IPR046977">
    <property type="entry name" value="RsmC/RlmG"/>
</dbReference>
<dbReference type="InterPro" id="IPR029063">
    <property type="entry name" value="SAM-dependent_MTases_sf"/>
</dbReference>
<dbReference type="InterPro" id="IPR007848">
    <property type="entry name" value="Small_mtfrase_dom"/>
</dbReference>
<dbReference type="NCBIfam" id="NF007023">
    <property type="entry name" value="PRK09489.1"/>
    <property type="match status" value="1"/>
</dbReference>
<dbReference type="PANTHER" id="PTHR47816">
    <property type="entry name" value="RIBOSOMAL RNA SMALL SUBUNIT METHYLTRANSFERASE C"/>
    <property type="match status" value="1"/>
</dbReference>
<dbReference type="PANTHER" id="PTHR47816:SF4">
    <property type="entry name" value="RIBOSOMAL RNA SMALL SUBUNIT METHYLTRANSFERASE C"/>
    <property type="match status" value="1"/>
</dbReference>
<dbReference type="Pfam" id="PF05175">
    <property type="entry name" value="MTS"/>
    <property type="match status" value="1"/>
</dbReference>
<dbReference type="Pfam" id="PF08468">
    <property type="entry name" value="MTS_N"/>
    <property type="match status" value="1"/>
</dbReference>
<dbReference type="SUPFAM" id="SSF53335">
    <property type="entry name" value="S-adenosyl-L-methionine-dependent methyltransferases"/>
    <property type="match status" value="1"/>
</dbReference>
<keyword id="KW-0963">Cytoplasm</keyword>
<keyword id="KW-0489">Methyltransferase</keyword>
<keyword id="KW-1185">Reference proteome</keyword>
<keyword id="KW-0698">rRNA processing</keyword>
<keyword id="KW-0949">S-adenosyl-L-methionine</keyword>
<keyword id="KW-0808">Transferase</keyword>
<name>RSMC_ECO55</name>
<evidence type="ECO:0000255" key="1">
    <source>
        <dbReference type="HAMAP-Rule" id="MF_01862"/>
    </source>
</evidence>
<organism>
    <name type="scientific">Escherichia coli (strain 55989 / EAEC)</name>
    <dbReference type="NCBI Taxonomy" id="585055"/>
    <lineage>
        <taxon>Bacteria</taxon>
        <taxon>Pseudomonadati</taxon>
        <taxon>Pseudomonadota</taxon>
        <taxon>Gammaproteobacteria</taxon>
        <taxon>Enterobacterales</taxon>
        <taxon>Enterobacteriaceae</taxon>
        <taxon>Escherichia</taxon>
    </lineage>
</organism>
<proteinExistence type="inferred from homology"/>
<protein>
    <recommendedName>
        <fullName evidence="1">Ribosomal RNA small subunit methyltransferase C</fullName>
        <ecNumber evidence="1">2.1.1.172</ecNumber>
    </recommendedName>
    <alternativeName>
        <fullName evidence="1">16S rRNA m2G1207 methyltransferase</fullName>
    </alternativeName>
    <alternativeName>
        <fullName evidence="1">rRNA (guanine-N(2)-)-methyltransferase RsmC</fullName>
    </alternativeName>
</protein>
<feature type="chain" id="PRO_0000369698" description="Ribosomal RNA small subunit methyltransferase C">
    <location>
        <begin position="1"/>
        <end position="343"/>
    </location>
</feature>
<reference key="1">
    <citation type="journal article" date="2009" name="PLoS Genet.">
        <title>Organised genome dynamics in the Escherichia coli species results in highly diverse adaptive paths.</title>
        <authorList>
            <person name="Touchon M."/>
            <person name="Hoede C."/>
            <person name="Tenaillon O."/>
            <person name="Barbe V."/>
            <person name="Baeriswyl S."/>
            <person name="Bidet P."/>
            <person name="Bingen E."/>
            <person name="Bonacorsi S."/>
            <person name="Bouchier C."/>
            <person name="Bouvet O."/>
            <person name="Calteau A."/>
            <person name="Chiapello H."/>
            <person name="Clermont O."/>
            <person name="Cruveiller S."/>
            <person name="Danchin A."/>
            <person name="Diard M."/>
            <person name="Dossat C."/>
            <person name="Karoui M.E."/>
            <person name="Frapy E."/>
            <person name="Garry L."/>
            <person name="Ghigo J.M."/>
            <person name="Gilles A.M."/>
            <person name="Johnson J."/>
            <person name="Le Bouguenec C."/>
            <person name="Lescat M."/>
            <person name="Mangenot S."/>
            <person name="Martinez-Jehanne V."/>
            <person name="Matic I."/>
            <person name="Nassif X."/>
            <person name="Oztas S."/>
            <person name="Petit M.A."/>
            <person name="Pichon C."/>
            <person name="Rouy Z."/>
            <person name="Ruf C.S."/>
            <person name="Schneider D."/>
            <person name="Tourret J."/>
            <person name="Vacherie B."/>
            <person name="Vallenet D."/>
            <person name="Medigue C."/>
            <person name="Rocha E.P.C."/>
            <person name="Denamur E."/>
        </authorList>
    </citation>
    <scope>NUCLEOTIDE SEQUENCE [LARGE SCALE GENOMIC DNA]</scope>
    <source>
        <strain>55989 / EAEC</strain>
    </source>
</reference>
<comment type="function">
    <text evidence="1">Specifically methylates the guanine in position 1207 of 16S rRNA in the 30S particle.</text>
</comment>
<comment type="catalytic activity">
    <reaction evidence="1">
        <text>guanosine(1207) in 16S rRNA + S-adenosyl-L-methionine = N(2)-methylguanosine(1207) in 16S rRNA + S-adenosyl-L-homocysteine + H(+)</text>
        <dbReference type="Rhea" id="RHEA:42736"/>
        <dbReference type="Rhea" id="RHEA-COMP:10213"/>
        <dbReference type="Rhea" id="RHEA-COMP:10214"/>
        <dbReference type="ChEBI" id="CHEBI:15378"/>
        <dbReference type="ChEBI" id="CHEBI:57856"/>
        <dbReference type="ChEBI" id="CHEBI:59789"/>
        <dbReference type="ChEBI" id="CHEBI:74269"/>
        <dbReference type="ChEBI" id="CHEBI:74481"/>
        <dbReference type="EC" id="2.1.1.172"/>
    </reaction>
</comment>
<comment type="subunit">
    <text evidence="1">Monomer.</text>
</comment>
<comment type="subcellular location">
    <subcellularLocation>
        <location evidence="1">Cytoplasm</location>
    </subcellularLocation>
</comment>
<comment type="similarity">
    <text evidence="1">Belongs to the methyltransferase superfamily. RsmC family.</text>
</comment>
<gene>
    <name evidence="1" type="primary">rsmC</name>
    <name type="ordered locus">EC55989_5032</name>
</gene>